<keyword id="KW-0131">Cell cycle</keyword>
<keyword id="KW-0132">Cell division</keyword>
<keyword id="KW-0133">Cell shape</keyword>
<keyword id="KW-0961">Cell wall biogenesis/degradation</keyword>
<keyword id="KW-0963">Cytoplasm</keyword>
<keyword id="KW-0326">Glycosidase</keyword>
<keyword id="KW-0378">Hydrolase</keyword>
<keyword id="KW-0573">Peptidoglycan synthesis</keyword>
<organism>
    <name type="scientific">Vibrio cholerae serotype O1 (strain ATCC 39541 / Classical Ogawa 395 / O395)</name>
    <dbReference type="NCBI Taxonomy" id="345073"/>
    <lineage>
        <taxon>Bacteria</taxon>
        <taxon>Pseudomonadati</taxon>
        <taxon>Pseudomonadota</taxon>
        <taxon>Gammaproteobacteria</taxon>
        <taxon>Vibrionales</taxon>
        <taxon>Vibrionaceae</taxon>
        <taxon>Vibrio</taxon>
    </lineage>
</organism>
<dbReference type="EC" id="3.2.1.52" evidence="1"/>
<dbReference type="EMBL" id="CP000627">
    <property type="protein sequence ID" value="ABQ20198.1"/>
    <property type="molecule type" value="Genomic_DNA"/>
</dbReference>
<dbReference type="EMBL" id="CP001235">
    <property type="protein sequence ID" value="ACP08727.1"/>
    <property type="molecule type" value="Genomic_DNA"/>
</dbReference>
<dbReference type="RefSeq" id="WP_000529116.1">
    <property type="nucleotide sequence ID" value="NZ_JAACZH010000006.1"/>
</dbReference>
<dbReference type="SMR" id="A5F8Y1"/>
<dbReference type="CAZy" id="GH3">
    <property type="family name" value="Glycoside Hydrolase Family 3"/>
</dbReference>
<dbReference type="KEGG" id="vco:VC0395_A0223"/>
<dbReference type="KEGG" id="vcr:VC395_0709"/>
<dbReference type="PATRIC" id="fig|345073.21.peg.690"/>
<dbReference type="eggNOG" id="COG1472">
    <property type="taxonomic scope" value="Bacteria"/>
</dbReference>
<dbReference type="HOGENOM" id="CLU_008392_0_0_6"/>
<dbReference type="OrthoDB" id="9786661at2"/>
<dbReference type="UniPathway" id="UPA00544"/>
<dbReference type="Proteomes" id="UP000000249">
    <property type="component" value="Chromosome 2"/>
</dbReference>
<dbReference type="GO" id="GO:0005737">
    <property type="term" value="C:cytoplasm"/>
    <property type="evidence" value="ECO:0007669"/>
    <property type="project" value="UniProtKB-SubCell"/>
</dbReference>
<dbReference type="GO" id="GO:0004563">
    <property type="term" value="F:beta-N-acetylhexosaminidase activity"/>
    <property type="evidence" value="ECO:0007669"/>
    <property type="project" value="UniProtKB-UniRule"/>
</dbReference>
<dbReference type="GO" id="GO:0005975">
    <property type="term" value="P:carbohydrate metabolic process"/>
    <property type="evidence" value="ECO:0007669"/>
    <property type="project" value="InterPro"/>
</dbReference>
<dbReference type="GO" id="GO:0051301">
    <property type="term" value="P:cell division"/>
    <property type="evidence" value="ECO:0007669"/>
    <property type="project" value="UniProtKB-KW"/>
</dbReference>
<dbReference type="GO" id="GO:0071555">
    <property type="term" value="P:cell wall organization"/>
    <property type="evidence" value="ECO:0007669"/>
    <property type="project" value="UniProtKB-KW"/>
</dbReference>
<dbReference type="GO" id="GO:0009252">
    <property type="term" value="P:peptidoglycan biosynthetic process"/>
    <property type="evidence" value="ECO:0007669"/>
    <property type="project" value="UniProtKB-KW"/>
</dbReference>
<dbReference type="GO" id="GO:0009254">
    <property type="term" value="P:peptidoglycan turnover"/>
    <property type="evidence" value="ECO:0007669"/>
    <property type="project" value="UniProtKB-UniRule"/>
</dbReference>
<dbReference type="GO" id="GO:0008360">
    <property type="term" value="P:regulation of cell shape"/>
    <property type="evidence" value="ECO:0007669"/>
    <property type="project" value="UniProtKB-KW"/>
</dbReference>
<dbReference type="FunFam" id="3.20.20.300:FF:000001">
    <property type="entry name" value="Beta-hexosaminidase"/>
    <property type="match status" value="1"/>
</dbReference>
<dbReference type="Gene3D" id="3.20.20.300">
    <property type="entry name" value="Glycoside hydrolase, family 3, N-terminal domain"/>
    <property type="match status" value="1"/>
</dbReference>
<dbReference type="HAMAP" id="MF_00364">
    <property type="entry name" value="NagZ"/>
    <property type="match status" value="1"/>
</dbReference>
<dbReference type="InterPro" id="IPR022956">
    <property type="entry name" value="Beta_hexosaminidase_bac"/>
</dbReference>
<dbReference type="InterPro" id="IPR019800">
    <property type="entry name" value="Glyco_hydro_3_AS"/>
</dbReference>
<dbReference type="InterPro" id="IPR001764">
    <property type="entry name" value="Glyco_hydro_3_N"/>
</dbReference>
<dbReference type="InterPro" id="IPR036962">
    <property type="entry name" value="Glyco_hydro_3_N_sf"/>
</dbReference>
<dbReference type="InterPro" id="IPR017853">
    <property type="entry name" value="Glycoside_hydrolase_SF"/>
</dbReference>
<dbReference type="InterPro" id="IPR050226">
    <property type="entry name" value="NagZ_Beta-hexosaminidase"/>
</dbReference>
<dbReference type="NCBIfam" id="NF003740">
    <property type="entry name" value="PRK05337.1"/>
    <property type="match status" value="1"/>
</dbReference>
<dbReference type="PANTHER" id="PTHR30480:SF13">
    <property type="entry name" value="BETA-HEXOSAMINIDASE"/>
    <property type="match status" value="1"/>
</dbReference>
<dbReference type="PANTHER" id="PTHR30480">
    <property type="entry name" value="BETA-HEXOSAMINIDASE-RELATED"/>
    <property type="match status" value="1"/>
</dbReference>
<dbReference type="Pfam" id="PF00933">
    <property type="entry name" value="Glyco_hydro_3"/>
    <property type="match status" value="1"/>
</dbReference>
<dbReference type="SUPFAM" id="SSF51445">
    <property type="entry name" value="(Trans)glycosidases"/>
    <property type="match status" value="1"/>
</dbReference>
<dbReference type="PROSITE" id="PS00775">
    <property type="entry name" value="GLYCOSYL_HYDROL_F3"/>
    <property type="match status" value="1"/>
</dbReference>
<feature type="chain" id="PRO_1000072096" description="Beta-hexosaminidase">
    <location>
        <begin position="1"/>
        <end position="330"/>
    </location>
</feature>
<feature type="active site" description="Proton donor/acceptor" evidence="1">
    <location>
        <position position="173"/>
    </location>
</feature>
<feature type="active site" description="Nucleophile" evidence="1">
    <location>
        <position position="242"/>
    </location>
</feature>
<feature type="binding site" evidence="1">
    <location>
        <position position="62"/>
    </location>
    <ligand>
        <name>substrate</name>
    </ligand>
</feature>
<feature type="binding site" evidence="1">
    <location>
        <position position="70"/>
    </location>
    <ligand>
        <name>substrate</name>
    </ligand>
</feature>
<feature type="binding site" evidence="1">
    <location>
        <position position="130"/>
    </location>
    <ligand>
        <name>substrate</name>
    </ligand>
</feature>
<feature type="binding site" evidence="1">
    <location>
        <begin position="160"/>
        <end position="161"/>
    </location>
    <ligand>
        <name>substrate</name>
    </ligand>
</feature>
<feature type="site" description="Important for catalytic activity" evidence="1">
    <location>
        <position position="171"/>
    </location>
</feature>
<accession>A5F8Y1</accession>
<accession>C3LY03</accession>
<evidence type="ECO:0000255" key="1">
    <source>
        <dbReference type="HAMAP-Rule" id="MF_00364"/>
    </source>
</evidence>
<reference key="1">
    <citation type="submission" date="2007-03" db="EMBL/GenBank/DDBJ databases">
        <authorList>
            <person name="Heidelberg J."/>
        </authorList>
    </citation>
    <scope>NUCLEOTIDE SEQUENCE [LARGE SCALE GENOMIC DNA]</scope>
    <source>
        <strain>ATCC 39541 / Classical Ogawa 395 / O395</strain>
    </source>
</reference>
<reference key="2">
    <citation type="journal article" date="2008" name="PLoS ONE">
        <title>A recalibrated molecular clock and independent origins for the cholera pandemic clones.</title>
        <authorList>
            <person name="Feng L."/>
            <person name="Reeves P.R."/>
            <person name="Lan R."/>
            <person name="Ren Y."/>
            <person name="Gao C."/>
            <person name="Zhou Z."/>
            <person name="Ren Y."/>
            <person name="Cheng J."/>
            <person name="Wang W."/>
            <person name="Wang J."/>
            <person name="Qian W."/>
            <person name="Li D."/>
            <person name="Wang L."/>
        </authorList>
    </citation>
    <scope>NUCLEOTIDE SEQUENCE [LARGE SCALE GENOMIC DNA]</scope>
    <source>
        <strain>ATCC 39541 / Classical Ogawa 395 / O395</strain>
    </source>
</reference>
<gene>
    <name evidence="1" type="primary">nagZ</name>
    <name type="synonym">exoII</name>
    <name type="ordered locus">VC0395_A0223</name>
    <name type="ordered locus">VC395_0709</name>
</gene>
<name>NAGZ_VIBC3</name>
<sequence>MGPLWLDVAGYELSAEDREILQHPTVGGVILFGRNYHDNQQLLALNKAIRQAAKRPILIGVDQEGGRVQRFREGFSRIPPAQYYARAENGVELAEQGGWLMAAELIAHDVDLSFAPVLDMGFACKAIGNRAFGEDVQTVLKHSSAFLRGMKAVGMATTGKHFPGHGAVIADSHLETPYDERETIAQDMAIFRAQIEAGVLDAMMPAHVVYPHYDAQPASGSSYWLKQVLREELGFKGIVFSDDLSMEGAAVMGGPVERSHQALVAGCDMILMCNKREAAVEVLDNLPIMVVPQATALLKKQQFSYSELKRLDRWQQASANMQRLIEQFSV</sequence>
<protein>
    <recommendedName>
        <fullName evidence="1">Beta-hexosaminidase</fullName>
        <ecNumber evidence="1">3.2.1.52</ecNumber>
    </recommendedName>
    <alternativeName>
        <fullName evidence="1">Beta-N-acetylhexosaminidase</fullName>
    </alternativeName>
    <alternativeName>
        <fullName evidence="1">N-acetyl-beta-glucosaminidase</fullName>
    </alternativeName>
</protein>
<comment type="function">
    <text evidence="1">Plays a role in peptidoglycan recycling by cleaving the terminal beta-1,4-linked N-acetylglucosamine (GlcNAc) from peptide-linked peptidoglycan fragments, giving rise to free GlcNAc, anhydro-N-acetylmuramic acid and anhydro-N-acetylmuramic acid-linked peptides.</text>
</comment>
<comment type="catalytic activity">
    <reaction evidence="1">
        <text>Hydrolysis of terminal non-reducing N-acetyl-D-hexosamine residues in N-acetyl-beta-D-hexosaminides.</text>
        <dbReference type="EC" id="3.2.1.52"/>
    </reaction>
</comment>
<comment type="pathway">
    <text evidence="1">Cell wall biogenesis; peptidoglycan recycling.</text>
</comment>
<comment type="subcellular location">
    <subcellularLocation>
        <location evidence="1">Cytoplasm</location>
    </subcellularLocation>
</comment>
<comment type="similarity">
    <text evidence="1">Belongs to the glycosyl hydrolase 3 family. NagZ subfamily.</text>
</comment>
<proteinExistence type="inferred from homology"/>